<name>RSSA_FUSV7</name>
<evidence type="ECO:0000255" key="1">
    <source>
        <dbReference type="HAMAP-Rule" id="MF_03015"/>
    </source>
</evidence>
<evidence type="ECO:0000256" key="2">
    <source>
        <dbReference type="SAM" id="MobiDB-lite"/>
    </source>
</evidence>
<evidence type="ECO:0000305" key="3"/>
<protein>
    <recommendedName>
        <fullName evidence="1">Small ribosomal subunit protein uS2</fullName>
    </recommendedName>
    <alternativeName>
        <fullName evidence="3">40S ribosomal protein S0</fullName>
    </alternativeName>
</protein>
<reference key="1">
    <citation type="journal article" date="2009" name="PLoS Genet.">
        <title>The genome of Nectria haematococca: contribution of supernumerary chromosomes to gene expansion.</title>
        <authorList>
            <person name="Coleman J.J."/>
            <person name="Rounsley S.D."/>
            <person name="Rodriguez-Carres M."/>
            <person name="Kuo A."/>
            <person name="Wasmann C.C."/>
            <person name="Grimwood J."/>
            <person name="Schmutz J."/>
            <person name="Taga M."/>
            <person name="White G.J."/>
            <person name="Zhou S."/>
            <person name="Schwartz D.C."/>
            <person name="Freitag M."/>
            <person name="Ma L.-J."/>
            <person name="Danchin E.G.J."/>
            <person name="Henrissat B."/>
            <person name="Coutinho P.M."/>
            <person name="Nelson D.R."/>
            <person name="Straney D."/>
            <person name="Napoli C.A."/>
            <person name="Barker B.M."/>
            <person name="Gribskov M."/>
            <person name="Rep M."/>
            <person name="Kroken S."/>
            <person name="Molnar I."/>
            <person name="Rensing C."/>
            <person name="Kennell J.C."/>
            <person name="Zamora J."/>
            <person name="Farman M.L."/>
            <person name="Selker E.U."/>
            <person name="Salamov A."/>
            <person name="Shapiro H."/>
            <person name="Pangilinan J."/>
            <person name="Lindquist E."/>
            <person name="Lamers C."/>
            <person name="Grigoriev I.V."/>
            <person name="Geiser D.M."/>
            <person name="Covert S.F."/>
            <person name="Temporini E."/>
            <person name="VanEtten H.D."/>
        </authorList>
    </citation>
    <scope>NUCLEOTIDE SEQUENCE [LARGE SCALE GENOMIC DNA]</scope>
    <source>
        <strain>ATCC MYA-4622 / CBS 123669 / FGSC 9596 / NRRL 45880 / 77-13-4</strain>
    </source>
</reference>
<keyword id="KW-0963">Cytoplasm</keyword>
<keyword id="KW-1185">Reference proteome</keyword>
<keyword id="KW-0687">Ribonucleoprotein</keyword>
<keyword id="KW-0689">Ribosomal protein</keyword>
<organism>
    <name type="scientific">Fusarium vanettenii (strain ATCC MYA-4622 / CBS 123669 / FGSC 9596 / NRRL 45880 / 77-13-4)</name>
    <name type="common">Fusarium solani subsp. pisi</name>
    <dbReference type="NCBI Taxonomy" id="660122"/>
    <lineage>
        <taxon>Eukaryota</taxon>
        <taxon>Fungi</taxon>
        <taxon>Dikarya</taxon>
        <taxon>Ascomycota</taxon>
        <taxon>Pezizomycotina</taxon>
        <taxon>Sordariomycetes</taxon>
        <taxon>Hypocreomycetidae</taxon>
        <taxon>Hypocreales</taxon>
        <taxon>Nectriaceae</taxon>
        <taxon>Fusarium</taxon>
        <taxon>Fusarium solani species complex</taxon>
        <taxon>Fusarium vanettenii</taxon>
    </lineage>
</organism>
<feature type="chain" id="PRO_0000389279" description="Small ribosomal subunit protein uS2">
    <location>
        <begin position="1"/>
        <end position="296"/>
    </location>
</feature>
<feature type="region of interest" description="Disordered" evidence="2">
    <location>
        <begin position="245"/>
        <end position="296"/>
    </location>
</feature>
<feature type="compositionally biased region" description="Low complexity" evidence="2">
    <location>
        <begin position="263"/>
        <end position="289"/>
    </location>
</feature>
<accession>C7Z0Q8</accession>
<comment type="function">
    <text evidence="1">Required for the assembly and/or stability of the 40S ribosomal subunit. Required for the processing of the 20S rRNA-precursor to mature 18S rRNA in a late step of the maturation of 40S ribosomal subunits.</text>
</comment>
<comment type="subunit">
    <text evidence="1">Component of the small ribosomal subunit. Mature ribosomes consist of a small (40S) and a large (60S) subunit. The 40S subunit contains about 33 different proteins and 1 molecule of RNA (18S). The 60S subunit contains about 49 different proteins and 3 molecules of RNA (25S, 5.8S and 5S). Interacts with RPS21.</text>
</comment>
<comment type="subcellular location">
    <subcellularLocation>
        <location evidence="1">Cytoplasm</location>
    </subcellularLocation>
</comment>
<comment type="similarity">
    <text evidence="1">Belongs to the universal ribosomal protein uS2 family.</text>
</comment>
<proteinExistence type="inferred from homology"/>
<sequence length="296" mass="31775">MAPSNLPSVFNATSQDIEMLLAAQCHLGSKNLQVHMENYLWKTRADGVNVLNVGKTWEKIVLAARIIAAIDNPADVCVISARPYGQRAVLKFASHTGATAIAGRFTPGSFTNYITRSFKEPRLIVVTDPRTDAQAIKEASYVNIPVIALTDTDSPTEYVDVAIPTNNKGRHAIGCVWWMLAREVLRLRGTIYSRETPWDVMVDLYFYRDPEAEAEEKVEEEKVPGAEEEGPAAIESGFAATGGDWEAPAAGFAGATGTGWDGAAGDEWGAAPATTEWAASAAPAAASGEAAKETTW</sequence>
<gene>
    <name evidence="1" type="primary">RPS0</name>
    <name type="ORF">NECHADRAFT_68978</name>
</gene>
<dbReference type="EMBL" id="GG698905">
    <property type="protein sequence ID" value="EEU42243.1"/>
    <property type="molecule type" value="Genomic_DNA"/>
</dbReference>
<dbReference type="RefSeq" id="XP_003047956.1">
    <property type="nucleotide sequence ID" value="XM_003047910.1"/>
</dbReference>
<dbReference type="SMR" id="C7Z0Q8"/>
<dbReference type="FunCoup" id="C7Z0Q8">
    <property type="interactions" value="1278"/>
</dbReference>
<dbReference type="STRING" id="660122.C7Z0Q8"/>
<dbReference type="EnsemblFungi" id="NechaT68978">
    <property type="protein sequence ID" value="NechaP68978"/>
    <property type="gene ID" value="NechaG68978"/>
</dbReference>
<dbReference type="GeneID" id="9667311"/>
<dbReference type="KEGG" id="nhe:NECHADRAFT_68978"/>
<dbReference type="VEuPathDB" id="FungiDB:NECHADRAFT_68978"/>
<dbReference type="eggNOG" id="KOG0830">
    <property type="taxonomic scope" value="Eukaryota"/>
</dbReference>
<dbReference type="HOGENOM" id="CLU_058171_0_1_1"/>
<dbReference type="InParanoid" id="C7Z0Q8"/>
<dbReference type="OMA" id="VKNFFEP"/>
<dbReference type="OrthoDB" id="414863at2759"/>
<dbReference type="Proteomes" id="UP000005206">
    <property type="component" value="Unassembled WGS sequence"/>
</dbReference>
<dbReference type="GO" id="GO:0022627">
    <property type="term" value="C:cytosolic small ribosomal subunit"/>
    <property type="evidence" value="ECO:0007669"/>
    <property type="project" value="UniProtKB-UniRule"/>
</dbReference>
<dbReference type="GO" id="GO:0003735">
    <property type="term" value="F:structural constituent of ribosome"/>
    <property type="evidence" value="ECO:0007669"/>
    <property type="project" value="UniProtKB-UniRule"/>
</dbReference>
<dbReference type="GO" id="GO:0000028">
    <property type="term" value="P:ribosomal small subunit assembly"/>
    <property type="evidence" value="ECO:0007669"/>
    <property type="project" value="UniProtKB-UniRule"/>
</dbReference>
<dbReference type="GO" id="GO:0006412">
    <property type="term" value="P:translation"/>
    <property type="evidence" value="ECO:0007669"/>
    <property type="project" value="UniProtKB-UniRule"/>
</dbReference>
<dbReference type="CDD" id="cd01425">
    <property type="entry name" value="RPS2"/>
    <property type="match status" value="1"/>
</dbReference>
<dbReference type="FunFam" id="3.40.50.10490:FF:000010">
    <property type="entry name" value="40S ribosomal protein S0"/>
    <property type="match status" value="1"/>
</dbReference>
<dbReference type="Gene3D" id="3.40.50.10490">
    <property type="entry name" value="Glucose-6-phosphate isomerase like protein, domain 1"/>
    <property type="match status" value="1"/>
</dbReference>
<dbReference type="HAMAP" id="MF_03015">
    <property type="entry name" value="Ribosomal_S2_euk"/>
    <property type="match status" value="1"/>
</dbReference>
<dbReference type="InterPro" id="IPR001865">
    <property type="entry name" value="Ribosomal_uS2"/>
</dbReference>
<dbReference type="InterPro" id="IPR032281">
    <property type="entry name" value="Ribosomal_uS2_C"/>
</dbReference>
<dbReference type="InterPro" id="IPR018130">
    <property type="entry name" value="Ribosomal_uS2_CS"/>
</dbReference>
<dbReference type="InterPro" id="IPR027498">
    <property type="entry name" value="Ribosomal_uS2_euk"/>
</dbReference>
<dbReference type="InterPro" id="IPR005707">
    <property type="entry name" value="Ribosomal_uS2_euk/arc"/>
</dbReference>
<dbReference type="InterPro" id="IPR023591">
    <property type="entry name" value="Ribosomal_uS2_flav_dom_sf"/>
</dbReference>
<dbReference type="NCBIfam" id="TIGR01012">
    <property type="entry name" value="uS2_euk_arch"/>
    <property type="match status" value="1"/>
</dbReference>
<dbReference type="PANTHER" id="PTHR11489">
    <property type="entry name" value="40S RIBOSOMAL PROTEIN SA"/>
    <property type="match status" value="1"/>
</dbReference>
<dbReference type="Pfam" id="PF16122">
    <property type="entry name" value="40S_SA_C"/>
    <property type="match status" value="1"/>
</dbReference>
<dbReference type="Pfam" id="PF00318">
    <property type="entry name" value="Ribosomal_S2"/>
    <property type="match status" value="2"/>
</dbReference>
<dbReference type="PRINTS" id="PR00395">
    <property type="entry name" value="RIBOSOMALS2"/>
</dbReference>
<dbReference type="SUPFAM" id="SSF52313">
    <property type="entry name" value="Ribosomal protein S2"/>
    <property type="match status" value="1"/>
</dbReference>
<dbReference type="PROSITE" id="PS00963">
    <property type="entry name" value="RIBOSOMAL_S2_2"/>
    <property type="match status" value="1"/>
</dbReference>